<accession>Q0TB37</accession>
<comment type="catalytic activity">
    <reaction evidence="1">
        <text>adenine + H2O + H(+) = hypoxanthine + NH4(+)</text>
        <dbReference type="Rhea" id="RHEA:23688"/>
        <dbReference type="ChEBI" id="CHEBI:15377"/>
        <dbReference type="ChEBI" id="CHEBI:15378"/>
        <dbReference type="ChEBI" id="CHEBI:16708"/>
        <dbReference type="ChEBI" id="CHEBI:17368"/>
        <dbReference type="ChEBI" id="CHEBI:28938"/>
        <dbReference type="EC" id="3.5.4.2"/>
    </reaction>
</comment>
<comment type="cofactor">
    <cofactor evidence="1">
        <name>Mn(2+)</name>
        <dbReference type="ChEBI" id="CHEBI:29035"/>
    </cofactor>
</comment>
<comment type="subunit">
    <text evidence="1">Homodimer.</text>
</comment>
<comment type="similarity">
    <text evidence="1">Belongs to the metallo-dependent hydrolases superfamily. Adenine deaminase family.</text>
</comment>
<reference key="1">
    <citation type="journal article" date="2006" name="Mol. Microbiol.">
        <title>Role of pathogenicity island-associated integrases in the genome plasticity of uropathogenic Escherichia coli strain 536.</title>
        <authorList>
            <person name="Hochhut B."/>
            <person name="Wilde C."/>
            <person name="Balling G."/>
            <person name="Middendorf B."/>
            <person name="Dobrindt U."/>
            <person name="Brzuszkiewicz E."/>
            <person name="Gottschalk G."/>
            <person name="Carniel E."/>
            <person name="Hacker J."/>
        </authorList>
    </citation>
    <scope>NUCLEOTIDE SEQUENCE [LARGE SCALE GENOMIC DNA]</scope>
    <source>
        <strain>536 / UPEC</strain>
    </source>
</reference>
<sequence>MNNSINHKFHHISRAEYQELLAVSRGDAVADYIIDNVSILDLINGGEISGPIVIKGRYIAGVGAEYADAPALQRIDARGATAVPGFIDAHLHIESSMMTPVTFETATLPRGLTTVICDPHEIVNVMGEAGFAWFARCAEQARQNQYLQVSSCVPALEGCDVNGASFTLEQMLAWRDHPQVTGLAEMMDYPGVISGQNALLDKLDAFRHLTLDGHCPGLGGKELNAYIAAGIENCHESYQLEEGRRKLQLGMSLMIREGSAARNLNALAPLINEFNSPQCMLCTDDRNPWEIAHEGHIDALIRRLIEQHNVPLHVAYRVASWSTARHFGLNHLGLLAPGKQADIVLLSDARKVTVQQVLVKGEPIDAQTLQAEESARLAQSAPPYGNTIDRQPVSASDFALQFTPGKRYRVIEVIHNELITHSRSSVYSENGFDRDDVCFIAVLERYGQRLAPACGLLGGFGLNEGALAATVSHDSHNIVVIGRSAEEMALAVNQVIQDGGGLCVVRNGQVQSHLPLPIAGLMSTDTAQSLAEQIDALKAAARECGPLPDEPFIQMAFLSLPVIPALKLTSQGLFDGEKFAFTTLEVTE</sequence>
<name>ADEC_ECOL5</name>
<feature type="chain" id="PRO_0000296725" description="Adenine deaminase">
    <location>
        <begin position="1"/>
        <end position="588"/>
    </location>
</feature>
<evidence type="ECO:0000255" key="1">
    <source>
        <dbReference type="HAMAP-Rule" id="MF_01518"/>
    </source>
</evidence>
<organism>
    <name type="scientific">Escherichia coli O6:K15:H31 (strain 536 / UPEC)</name>
    <dbReference type="NCBI Taxonomy" id="362663"/>
    <lineage>
        <taxon>Bacteria</taxon>
        <taxon>Pseudomonadati</taxon>
        <taxon>Pseudomonadota</taxon>
        <taxon>Gammaproteobacteria</taxon>
        <taxon>Enterobacterales</taxon>
        <taxon>Enterobacteriaceae</taxon>
        <taxon>Escherichia</taxon>
    </lineage>
</organism>
<keyword id="KW-0378">Hydrolase</keyword>
<keyword id="KW-0464">Manganese</keyword>
<gene>
    <name evidence="1" type="primary">ade</name>
    <name type="ordered locus">ECP_3871</name>
</gene>
<protein>
    <recommendedName>
        <fullName evidence="1">Adenine deaminase</fullName>
        <shortName evidence="1">Adenase</shortName>
        <shortName evidence="1">Adenine aminase</shortName>
        <ecNumber evidence="1">3.5.4.2</ecNumber>
    </recommendedName>
</protein>
<dbReference type="EC" id="3.5.4.2" evidence="1"/>
<dbReference type="EMBL" id="CP000247">
    <property type="protein sequence ID" value="ABG71842.1"/>
    <property type="molecule type" value="Genomic_DNA"/>
</dbReference>
<dbReference type="SMR" id="Q0TB37"/>
<dbReference type="KEGG" id="ecp:ECP_3871"/>
<dbReference type="HOGENOM" id="CLU_027935_0_0_6"/>
<dbReference type="Proteomes" id="UP000009182">
    <property type="component" value="Chromosome"/>
</dbReference>
<dbReference type="GO" id="GO:0000034">
    <property type="term" value="F:adenine deaminase activity"/>
    <property type="evidence" value="ECO:0007669"/>
    <property type="project" value="UniProtKB-UniRule"/>
</dbReference>
<dbReference type="GO" id="GO:0006146">
    <property type="term" value="P:adenine catabolic process"/>
    <property type="evidence" value="ECO:0007669"/>
    <property type="project" value="InterPro"/>
</dbReference>
<dbReference type="CDD" id="cd01295">
    <property type="entry name" value="AdeC"/>
    <property type="match status" value="1"/>
</dbReference>
<dbReference type="FunFam" id="3.20.20.140:FF:000016">
    <property type="entry name" value="Adenine deaminase"/>
    <property type="match status" value="1"/>
</dbReference>
<dbReference type="Gene3D" id="3.20.20.140">
    <property type="entry name" value="Metal-dependent hydrolases"/>
    <property type="match status" value="1"/>
</dbReference>
<dbReference type="Gene3D" id="2.30.40.10">
    <property type="entry name" value="Urease, subunit C, domain 1"/>
    <property type="match status" value="1"/>
</dbReference>
<dbReference type="HAMAP" id="MF_01518">
    <property type="entry name" value="Adenine_deamin"/>
    <property type="match status" value="1"/>
</dbReference>
<dbReference type="InterPro" id="IPR006679">
    <property type="entry name" value="Adenine_deam"/>
</dbReference>
<dbReference type="InterPro" id="IPR026912">
    <property type="entry name" value="Adenine_deam_C"/>
</dbReference>
<dbReference type="InterPro" id="IPR006680">
    <property type="entry name" value="Amidohydro-rel"/>
</dbReference>
<dbReference type="InterPro" id="IPR011059">
    <property type="entry name" value="Metal-dep_hydrolase_composite"/>
</dbReference>
<dbReference type="InterPro" id="IPR032466">
    <property type="entry name" value="Metal_Hydrolase"/>
</dbReference>
<dbReference type="NCBIfam" id="TIGR01178">
    <property type="entry name" value="ade"/>
    <property type="match status" value="1"/>
</dbReference>
<dbReference type="NCBIfam" id="NF007457">
    <property type="entry name" value="PRK10027.1"/>
    <property type="match status" value="1"/>
</dbReference>
<dbReference type="PANTHER" id="PTHR11113:SF2">
    <property type="entry name" value="ADENINE DEAMINASE"/>
    <property type="match status" value="1"/>
</dbReference>
<dbReference type="PANTHER" id="PTHR11113">
    <property type="entry name" value="N-ACETYLGLUCOSAMINE-6-PHOSPHATE DEACETYLASE"/>
    <property type="match status" value="1"/>
</dbReference>
<dbReference type="Pfam" id="PF13382">
    <property type="entry name" value="Adenine_deam_C"/>
    <property type="match status" value="1"/>
</dbReference>
<dbReference type="Pfam" id="PF01979">
    <property type="entry name" value="Amidohydro_1"/>
    <property type="match status" value="1"/>
</dbReference>
<dbReference type="SUPFAM" id="SSF51338">
    <property type="entry name" value="Composite domain of metallo-dependent hydrolases"/>
    <property type="match status" value="1"/>
</dbReference>
<dbReference type="SUPFAM" id="SSF51556">
    <property type="entry name" value="Metallo-dependent hydrolases"/>
    <property type="match status" value="1"/>
</dbReference>
<proteinExistence type="inferred from homology"/>